<gene>
    <name evidence="1" type="primary">eno</name>
    <name type="ordered locus">Csac_1950</name>
</gene>
<comment type="function">
    <text evidence="1">Catalyzes the reversible conversion of 2-phosphoglycerate (2-PG) into phosphoenolpyruvate (PEP). It is essential for the degradation of carbohydrates via glycolysis.</text>
</comment>
<comment type="catalytic activity">
    <reaction evidence="1">
        <text>(2R)-2-phosphoglycerate = phosphoenolpyruvate + H2O</text>
        <dbReference type="Rhea" id="RHEA:10164"/>
        <dbReference type="ChEBI" id="CHEBI:15377"/>
        <dbReference type="ChEBI" id="CHEBI:58289"/>
        <dbReference type="ChEBI" id="CHEBI:58702"/>
        <dbReference type="EC" id="4.2.1.11"/>
    </reaction>
</comment>
<comment type="cofactor">
    <cofactor evidence="1">
        <name>Mg(2+)</name>
        <dbReference type="ChEBI" id="CHEBI:18420"/>
    </cofactor>
    <text evidence="1">Binds a second Mg(2+) ion via substrate during catalysis.</text>
</comment>
<comment type="pathway">
    <text evidence="1">Carbohydrate degradation; glycolysis; pyruvate from D-glyceraldehyde 3-phosphate: step 4/5.</text>
</comment>
<comment type="subcellular location">
    <subcellularLocation>
        <location evidence="1">Cytoplasm</location>
    </subcellularLocation>
    <subcellularLocation>
        <location evidence="1">Secreted</location>
    </subcellularLocation>
    <subcellularLocation>
        <location evidence="1">Cell surface</location>
    </subcellularLocation>
    <text evidence="1">Fractions of enolase are present in both the cytoplasm and on the cell surface.</text>
</comment>
<comment type="similarity">
    <text evidence="1">Belongs to the enolase family.</text>
</comment>
<reference key="1">
    <citation type="submission" date="2007-04" db="EMBL/GenBank/DDBJ databases">
        <title>Genome sequence of the thermophilic hydrogen-producing bacterium Caldicellulosiruptor saccharolyticus DSM 8903.</title>
        <authorList>
            <person name="Copeland A."/>
            <person name="Lucas S."/>
            <person name="Lapidus A."/>
            <person name="Barry K."/>
            <person name="Detter J.C."/>
            <person name="Glavina del Rio T."/>
            <person name="Hammon N."/>
            <person name="Israni S."/>
            <person name="Dalin E."/>
            <person name="Tice H."/>
            <person name="Pitluck S."/>
            <person name="Kiss H."/>
            <person name="Brettin T."/>
            <person name="Bruce D."/>
            <person name="Han C."/>
            <person name="Schmutz J."/>
            <person name="Larimer F."/>
            <person name="Land M."/>
            <person name="Hauser L."/>
            <person name="Kyrpides N."/>
            <person name="Lykidis A."/>
            <person name="van de Werken H.J.G."/>
            <person name="Verhaart M.R.A."/>
            <person name="VanFossen A.L."/>
            <person name="Lewis D.L."/>
            <person name="Nichols J.D."/>
            <person name="Goorissen H.P."/>
            <person name="van Niel E.W.J."/>
            <person name="Stams F.J.M."/>
            <person name="Willquist K.U."/>
            <person name="Ward D.E."/>
            <person name="van der Oost J."/>
            <person name="Kelly R.M."/>
            <person name="Kengen S.M.W."/>
            <person name="Richardson P."/>
        </authorList>
    </citation>
    <scope>NUCLEOTIDE SEQUENCE [LARGE SCALE GENOMIC DNA]</scope>
    <source>
        <strain>ATCC 43494 / DSM 8903 / Tp8T 6331</strain>
    </source>
</reference>
<accession>A4XKV0</accession>
<protein>
    <recommendedName>
        <fullName evidence="1">Enolase</fullName>
        <ecNumber evidence="1">4.2.1.11</ecNumber>
    </recommendedName>
    <alternativeName>
        <fullName evidence="1">2-phospho-D-glycerate hydro-lyase</fullName>
    </alternativeName>
    <alternativeName>
        <fullName evidence="1">2-phosphoglycerate dehydratase</fullName>
    </alternativeName>
</protein>
<organism>
    <name type="scientific">Caldicellulosiruptor saccharolyticus (strain ATCC 43494 / DSM 8903 / Tp8T 6331)</name>
    <dbReference type="NCBI Taxonomy" id="351627"/>
    <lineage>
        <taxon>Bacteria</taxon>
        <taxon>Bacillati</taxon>
        <taxon>Bacillota</taxon>
        <taxon>Bacillota incertae sedis</taxon>
        <taxon>Caldicellulosiruptorales</taxon>
        <taxon>Caldicellulosiruptoraceae</taxon>
        <taxon>Caldicellulosiruptor</taxon>
    </lineage>
</organism>
<feature type="chain" id="PRO_1000019197" description="Enolase">
    <location>
        <begin position="1"/>
        <end position="434"/>
    </location>
</feature>
<feature type="active site" description="Proton donor" evidence="1">
    <location>
        <position position="208"/>
    </location>
</feature>
<feature type="active site" description="Proton acceptor" evidence="1">
    <location>
        <position position="342"/>
    </location>
</feature>
<feature type="binding site" evidence="1">
    <location>
        <position position="166"/>
    </location>
    <ligand>
        <name>(2R)-2-phosphoglycerate</name>
        <dbReference type="ChEBI" id="CHEBI:58289"/>
    </ligand>
</feature>
<feature type="binding site" evidence="1">
    <location>
        <position position="245"/>
    </location>
    <ligand>
        <name>Mg(2+)</name>
        <dbReference type="ChEBI" id="CHEBI:18420"/>
    </ligand>
</feature>
<feature type="binding site" evidence="1">
    <location>
        <position position="290"/>
    </location>
    <ligand>
        <name>Mg(2+)</name>
        <dbReference type="ChEBI" id="CHEBI:18420"/>
    </ligand>
</feature>
<feature type="binding site" evidence="1">
    <location>
        <position position="317"/>
    </location>
    <ligand>
        <name>Mg(2+)</name>
        <dbReference type="ChEBI" id="CHEBI:18420"/>
    </ligand>
</feature>
<feature type="binding site" evidence="1">
    <location>
        <position position="342"/>
    </location>
    <ligand>
        <name>(2R)-2-phosphoglycerate</name>
        <dbReference type="ChEBI" id="CHEBI:58289"/>
    </ligand>
</feature>
<feature type="binding site" evidence="1">
    <location>
        <position position="371"/>
    </location>
    <ligand>
        <name>(2R)-2-phosphoglycerate</name>
        <dbReference type="ChEBI" id="CHEBI:58289"/>
    </ligand>
</feature>
<feature type="binding site" evidence="1">
    <location>
        <position position="372"/>
    </location>
    <ligand>
        <name>(2R)-2-phosphoglycerate</name>
        <dbReference type="ChEBI" id="CHEBI:58289"/>
    </ligand>
</feature>
<feature type="binding site" evidence="1">
    <location>
        <position position="393"/>
    </location>
    <ligand>
        <name>(2R)-2-phosphoglycerate</name>
        <dbReference type="ChEBI" id="CHEBI:58289"/>
    </ligand>
</feature>
<sequence length="434" mass="47266">MKVDLSITAVKAREILDSRGNPTVEVEVVVNDEFVGRAAVPSGASTGMFEAVELRDGDKKRYMGKGVLKAVENVNEVIAPEIIGMNALNQVEIDRLMIELDGTENKSKLGANAILGVSLAVAKAAANALGLPLYQYIGGVNAKYLPVPMMNILNGGKHADNSVDLQEFMIMPVGAKSFSEALRMCAETFHQLRNVLKARGYNTTVGDEGGFAPNLKSNEEPLEVIVEAIEKAGYTPGKDIAIALDPATSELYNEEDGKYHFEREGKVRTKEEMVEFWVKLVEKYPIVSIEDGVAEEDWEGWKMLTEALGKKIQLVGDDLFVTNTKRLAKGIELGVANSILIKLNQIGTLTETLEAIEMANRAGYTAVVSHRSGETEDTTIADLVVAVNAGQIKTGAPSRTDRVAKYNQLLRIEEELGSIAVYPGMNAFFNLKKK</sequence>
<keyword id="KW-0963">Cytoplasm</keyword>
<keyword id="KW-0324">Glycolysis</keyword>
<keyword id="KW-0456">Lyase</keyword>
<keyword id="KW-0460">Magnesium</keyword>
<keyword id="KW-0479">Metal-binding</keyword>
<keyword id="KW-0964">Secreted</keyword>
<proteinExistence type="inferred from homology"/>
<dbReference type="EC" id="4.2.1.11" evidence="1"/>
<dbReference type="EMBL" id="CP000679">
    <property type="protein sequence ID" value="ABP67535.1"/>
    <property type="molecule type" value="Genomic_DNA"/>
</dbReference>
<dbReference type="RefSeq" id="WP_011917471.1">
    <property type="nucleotide sequence ID" value="NC_009437.1"/>
</dbReference>
<dbReference type="SMR" id="A4XKV0"/>
<dbReference type="STRING" id="351627.Csac_1950"/>
<dbReference type="KEGG" id="csc:Csac_1950"/>
<dbReference type="eggNOG" id="COG0148">
    <property type="taxonomic scope" value="Bacteria"/>
</dbReference>
<dbReference type="HOGENOM" id="CLU_031223_2_1_9"/>
<dbReference type="OrthoDB" id="9804716at2"/>
<dbReference type="UniPathway" id="UPA00109">
    <property type="reaction ID" value="UER00187"/>
</dbReference>
<dbReference type="Proteomes" id="UP000000256">
    <property type="component" value="Chromosome"/>
</dbReference>
<dbReference type="GO" id="GO:0009986">
    <property type="term" value="C:cell surface"/>
    <property type="evidence" value="ECO:0007669"/>
    <property type="project" value="UniProtKB-SubCell"/>
</dbReference>
<dbReference type="GO" id="GO:0005576">
    <property type="term" value="C:extracellular region"/>
    <property type="evidence" value="ECO:0007669"/>
    <property type="project" value="UniProtKB-SubCell"/>
</dbReference>
<dbReference type="GO" id="GO:0000015">
    <property type="term" value="C:phosphopyruvate hydratase complex"/>
    <property type="evidence" value="ECO:0007669"/>
    <property type="project" value="InterPro"/>
</dbReference>
<dbReference type="GO" id="GO:0000287">
    <property type="term" value="F:magnesium ion binding"/>
    <property type="evidence" value="ECO:0007669"/>
    <property type="project" value="UniProtKB-UniRule"/>
</dbReference>
<dbReference type="GO" id="GO:0004634">
    <property type="term" value="F:phosphopyruvate hydratase activity"/>
    <property type="evidence" value="ECO:0007669"/>
    <property type="project" value="UniProtKB-UniRule"/>
</dbReference>
<dbReference type="GO" id="GO:0006096">
    <property type="term" value="P:glycolytic process"/>
    <property type="evidence" value="ECO:0007669"/>
    <property type="project" value="UniProtKB-UniRule"/>
</dbReference>
<dbReference type="CDD" id="cd03313">
    <property type="entry name" value="enolase"/>
    <property type="match status" value="1"/>
</dbReference>
<dbReference type="FunFam" id="3.20.20.120:FF:000001">
    <property type="entry name" value="Enolase"/>
    <property type="match status" value="1"/>
</dbReference>
<dbReference type="FunFam" id="3.30.390.10:FF:000001">
    <property type="entry name" value="Enolase"/>
    <property type="match status" value="1"/>
</dbReference>
<dbReference type="Gene3D" id="3.20.20.120">
    <property type="entry name" value="Enolase-like C-terminal domain"/>
    <property type="match status" value="1"/>
</dbReference>
<dbReference type="Gene3D" id="3.30.390.10">
    <property type="entry name" value="Enolase-like, N-terminal domain"/>
    <property type="match status" value="1"/>
</dbReference>
<dbReference type="HAMAP" id="MF_00318">
    <property type="entry name" value="Enolase"/>
    <property type="match status" value="1"/>
</dbReference>
<dbReference type="InterPro" id="IPR000941">
    <property type="entry name" value="Enolase"/>
</dbReference>
<dbReference type="InterPro" id="IPR036849">
    <property type="entry name" value="Enolase-like_C_sf"/>
</dbReference>
<dbReference type="InterPro" id="IPR029017">
    <property type="entry name" value="Enolase-like_N"/>
</dbReference>
<dbReference type="InterPro" id="IPR020810">
    <property type="entry name" value="Enolase_C"/>
</dbReference>
<dbReference type="InterPro" id="IPR020809">
    <property type="entry name" value="Enolase_CS"/>
</dbReference>
<dbReference type="InterPro" id="IPR020811">
    <property type="entry name" value="Enolase_N"/>
</dbReference>
<dbReference type="NCBIfam" id="TIGR01060">
    <property type="entry name" value="eno"/>
    <property type="match status" value="1"/>
</dbReference>
<dbReference type="PANTHER" id="PTHR11902">
    <property type="entry name" value="ENOLASE"/>
    <property type="match status" value="1"/>
</dbReference>
<dbReference type="PANTHER" id="PTHR11902:SF1">
    <property type="entry name" value="ENOLASE"/>
    <property type="match status" value="1"/>
</dbReference>
<dbReference type="Pfam" id="PF00113">
    <property type="entry name" value="Enolase_C"/>
    <property type="match status" value="1"/>
</dbReference>
<dbReference type="Pfam" id="PF03952">
    <property type="entry name" value="Enolase_N"/>
    <property type="match status" value="1"/>
</dbReference>
<dbReference type="PIRSF" id="PIRSF001400">
    <property type="entry name" value="Enolase"/>
    <property type="match status" value="1"/>
</dbReference>
<dbReference type="PRINTS" id="PR00148">
    <property type="entry name" value="ENOLASE"/>
</dbReference>
<dbReference type="SFLD" id="SFLDS00001">
    <property type="entry name" value="Enolase"/>
    <property type="match status" value="1"/>
</dbReference>
<dbReference type="SFLD" id="SFLDF00002">
    <property type="entry name" value="enolase"/>
    <property type="match status" value="1"/>
</dbReference>
<dbReference type="SMART" id="SM01192">
    <property type="entry name" value="Enolase_C"/>
    <property type="match status" value="1"/>
</dbReference>
<dbReference type="SMART" id="SM01193">
    <property type="entry name" value="Enolase_N"/>
    <property type="match status" value="1"/>
</dbReference>
<dbReference type="SUPFAM" id="SSF51604">
    <property type="entry name" value="Enolase C-terminal domain-like"/>
    <property type="match status" value="1"/>
</dbReference>
<dbReference type="SUPFAM" id="SSF54826">
    <property type="entry name" value="Enolase N-terminal domain-like"/>
    <property type="match status" value="1"/>
</dbReference>
<dbReference type="PROSITE" id="PS00164">
    <property type="entry name" value="ENOLASE"/>
    <property type="match status" value="1"/>
</dbReference>
<name>ENO_CALS8</name>
<evidence type="ECO:0000255" key="1">
    <source>
        <dbReference type="HAMAP-Rule" id="MF_00318"/>
    </source>
</evidence>